<feature type="chain" id="PRO_0000218330" description="Small, acid-soluble spore protein I">
    <location>
        <begin position="1"/>
        <end position="69"/>
    </location>
</feature>
<accession>Q633N2</accession>
<sequence>MSFNLRGAVLANVSGNTQDQLQETIVDAIQSGEEKMLPGLGVLFEVIWKNADENEKHEMLETLEQGLKK</sequence>
<protein>
    <recommendedName>
        <fullName evidence="1">Small, acid-soluble spore protein I</fullName>
        <shortName evidence="1">SASP I</shortName>
    </recommendedName>
</protein>
<reference key="1">
    <citation type="journal article" date="2006" name="J. Bacteriol.">
        <title>Pathogenomic sequence analysis of Bacillus cereus and Bacillus thuringiensis isolates closely related to Bacillus anthracis.</title>
        <authorList>
            <person name="Han C.S."/>
            <person name="Xie G."/>
            <person name="Challacombe J.F."/>
            <person name="Altherr M.R."/>
            <person name="Bhotika S.S."/>
            <person name="Bruce D."/>
            <person name="Campbell C.S."/>
            <person name="Campbell M.L."/>
            <person name="Chen J."/>
            <person name="Chertkov O."/>
            <person name="Cleland C."/>
            <person name="Dimitrijevic M."/>
            <person name="Doggett N.A."/>
            <person name="Fawcett J.J."/>
            <person name="Glavina T."/>
            <person name="Goodwin L.A."/>
            <person name="Hill K.K."/>
            <person name="Hitchcock P."/>
            <person name="Jackson P.J."/>
            <person name="Keim P."/>
            <person name="Kewalramani A.R."/>
            <person name="Longmire J."/>
            <person name="Lucas S."/>
            <person name="Malfatti S."/>
            <person name="McMurry K."/>
            <person name="Meincke L.J."/>
            <person name="Misra M."/>
            <person name="Moseman B.L."/>
            <person name="Mundt M."/>
            <person name="Munk A.C."/>
            <person name="Okinaka R.T."/>
            <person name="Parson-Quintana B."/>
            <person name="Reilly L.P."/>
            <person name="Richardson P."/>
            <person name="Robinson D.L."/>
            <person name="Rubin E."/>
            <person name="Saunders E."/>
            <person name="Tapia R."/>
            <person name="Tesmer J.G."/>
            <person name="Thayer N."/>
            <person name="Thompson L.S."/>
            <person name="Tice H."/>
            <person name="Ticknor L.O."/>
            <person name="Wills P.L."/>
            <person name="Brettin T.S."/>
            <person name="Gilna P."/>
        </authorList>
    </citation>
    <scope>NUCLEOTIDE SEQUENCE [LARGE SCALE GENOMIC DNA]</scope>
    <source>
        <strain>ZK / E33L</strain>
    </source>
</reference>
<dbReference type="EMBL" id="CP000001">
    <property type="protein sequence ID" value="AAU15963.1"/>
    <property type="molecule type" value="Genomic_DNA"/>
</dbReference>
<dbReference type="RefSeq" id="WP_000009513.1">
    <property type="nucleotide sequence ID" value="NZ_CP009968.1"/>
</dbReference>
<dbReference type="SMR" id="Q633N2"/>
<dbReference type="GeneID" id="93006545"/>
<dbReference type="KEGG" id="bcz:BCE33L4306"/>
<dbReference type="PATRIC" id="fig|288681.22.peg.1068"/>
<dbReference type="Proteomes" id="UP000002612">
    <property type="component" value="Chromosome"/>
</dbReference>
<dbReference type="GO" id="GO:0030436">
    <property type="term" value="P:asexual sporulation"/>
    <property type="evidence" value="ECO:0007669"/>
    <property type="project" value="UniProtKB-UniRule"/>
</dbReference>
<dbReference type="GO" id="GO:0030435">
    <property type="term" value="P:sporulation resulting in formation of a cellular spore"/>
    <property type="evidence" value="ECO:0007669"/>
    <property type="project" value="UniProtKB-KW"/>
</dbReference>
<dbReference type="HAMAP" id="MF_00669">
    <property type="entry name" value="SspI"/>
    <property type="match status" value="1"/>
</dbReference>
<dbReference type="InterPro" id="IPR017525">
    <property type="entry name" value="SspI"/>
</dbReference>
<dbReference type="NCBIfam" id="TIGR03092">
    <property type="entry name" value="SASP_sspI"/>
    <property type="match status" value="1"/>
</dbReference>
<dbReference type="Pfam" id="PF14098">
    <property type="entry name" value="SSPI"/>
    <property type="match status" value="1"/>
</dbReference>
<keyword id="KW-0749">Sporulation</keyword>
<proteinExistence type="inferred from homology"/>
<gene>
    <name evidence="1" type="primary">sspI</name>
    <name type="ordered locus">BCE33L4306</name>
</gene>
<organism>
    <name type="scientific">Bacillus cereus (strain ZK / E33L)</name>
    <dbReference type="NCBI Taxonomy" id="288681"/>
    <lineage>
        <taxon>Bacteria</taxon>
        <taxon>Bacillati</taxon>
        <taxon>Bacillota</taxon>
        <taxon>Bacilli</taxon>
        <taxon>Bacillales</taxon>
        <taxon>Bacillaceae</taxon>
        <taxon>Bacillus</taxon>
        <taxon>Bacillus cereus group</taxon>
    </lineage>
</organism>
<comment type="subcellular location">
    <subcellularLocation>
        <location evidence="1">Spore core</location>
    </subcellularLocation>
</comment>
<comment type="induction">
    <text evidence="1">Expressed only in the forespore compartment of sporulating cells.</text>
</comment>
<comment type="similarity">
    <text evidence="1">Belongs to the SspI family.</text>
</comment>
<evidence type="ECO:0000255" key="1">
    <source>
        <dbReference type="HAMAP-Rule" id="MF_00669"/>
    </source>
</evidence>
<name>SSPI_BACCZ</name>